<gene>
    <name evidence="1" type="primary">esxK</name>
    <name type="ordered locus">MT1235</name>
</gene>
<evidence type="ECO:0000250" key="1">
    <source>
        <dbReference type="UniProtKB" id="P9WNJ7"/>
    </source>
</evidence>
<evidence type="ECO:0000305" key="2"/>
<dbReference type="EMBL" id="AE000516">
    <property type="protein sequence ID" value="AAK45492.1"/>
    <property type="molecule type" value="Genomic_DNA"/>
</dbReference>
<dbReference type="PIR" id="C70608">
    <property type="entry name" value="C70608"/>
</dbReference>
<dbReference type="SMR" id="P9WNJ6"/>
<dbReference type="KEGG" id="mtc:MT1235"/>
<dbReference type="HOGENOM" id="CLU_171031_0_0_11"/>
<dbReference type="Proteomes" id="UP000001020">
    <property type="component" value="Chromosome"/>
</dbReference>
<dbReference type="GO" id="GO:0005576">
    <property type="term" value="C:extracellular region"/>
    <property type="evidence" value="ECO:0007669"/>
    <property type="project" value="UniProtKB-SubCell"/>
</dbReference>
<dbReference type="FunFam" id="1.10.287.1060:FF:000006">
    <property type="entry name" value="ESAT-6-like protein"/>
    <property type="match status" value="1"/>
</dbReference>
<dbReference type="Gene3D" id="1.10.287.1060">
    <property type="entry name" value="ESAT-6-like"/>
    <property type="match status" value="1"/>
</dbReference>
<dbReference type="InterPro" id="IPR036689">
    <property type="entry name" value="ESAT-6-like_sf"/>
</dbReference>
<dbReference type="InterPro" id="IPR010310">
    <property type="entry name" value="T7SS_ESAT-6-like"/>
</dbReference>
<dbReference type="NCBIfam" id="TIGR03930">
    <property type="entry name" value="WXG100_ESAT6"/>
    <property type="match status" value="1"/>
</dbReference>
<dbReference type="Pfam" id="PF06013">
    <property type="entry name" value="WXG100"/>
    <property type="match status" value="1"/>
</dbReference>
<dbReference type="SUPFAM" id="SSF140453">
    <property type="entry name" value="EsxAB dimer-like"/>
    <property type="match status" value="1"/>
</dbReference>
<name>ESXK_MYCTO</name>
<sequence>MATRFMTDPHAMRDMAGRFEVHAQTVEDEARRMWASAQNISGAGWSGMAEATSLDTMAQMNQAFRNIVNMLHGVRDGLVRDANNYEQQEQASQQILSS</sequence>
<keyword id="KW-1185">Reference proteome</keyword>
<keyword id="KW-0964">Secreted</keyword>
<feature type="chain" id="PRO_0000427115" description="ESAT-6-like protein EsxK">
    <location>
        <begin position="1"/>
        <end position="98"/>
    </location>
</feature>
<proteinExistence type="inferred from homology"/>
<organism>
    <name type="scientific">Mycobacterium tuberculosis (strain CDC 1551 / Oshkosh)</name>
    <dbReference type="NCBI Taxonomy" id="83331"/>
    <lineage>
        <taxon>Bacteria</taxon>
        <taxon>Bacillati</taxon>
        <taxon>Actinomycetota</taxon>
        <taxon>Actinomycetes</taxon>
        <taxon>Mycobacteriales</taxon>
        <taxon>Mycobacteriaceae</taxon>
        <taxon>Mycobacterium</taxon>
        <taxon>Mycobacterium tuberculosis complex</taxon>
    </lineage>
</organism>
<accession>P9WNJ6</accession>
<accession>L0T8X9</accession>
<accession>O05299</accession>
<reference key="1">
    <citation type="journal article" date="2002" name="J. Bacteriol.">
        <title>Whole-genome comparison of Mycobacterium tuberculosis clinical and laboratory strains.</title>
        <authorList>
            <person name="Fleischmann R.D."/>
            <person name="Alland D."/>
            <person name="Eisen J.A."/>
            <person name="Carpenter L."/>
            <person name="White O."/>
            <person name="Peterson J.D."/>
            <person name="DeBoy R.T."/>
            <person name="Dodson R.J."/>
            <person name="Gwinn M.L."/>
            <person name="Haft D.H."/>
            <person name="Hickey E.K."/>
            <person name="Kolonay J.F."/>
            <person name="Nelson W.C."/>
            <person name="Umayam L.A."/>
            <person name="Ermolaeva M.D."/>
            <person name="Salzberg S.L."/>
            <person name="Delcher A."/>
            <person name="Utterback T.R."/>
            <person name="Weidman J.F."/>
            <person name="Khouri H.M."/>
            <person name="Gill J."/>
            <person name="Mikula A."/>
            <person name="Bishai W."/>
            <person name="Jacobs W.R. Jr."/>
            <person name="Venter J.C."/>
            <person name="Fraser C.M."/>
        </authorList>
    </citation>
    <scope>NUCLEOTIDE SEQUENCE [LARGE SCALE GENOMIC DNA]</scope>
    <source>
        <strain>CDC 1551 / Oshkosh</strain>
    </source>
</reference>
<comment type="subunit">
    <text evidence="1">Strongly interacts with EsxL to form a heterodimeric complex under reducing conditions.</text>
</comment>
<comment type="subcellular location">
    <subcellularLocation>
        <location evidence="1">Secreted</location>
    </subcellularLocation>
    <text evidence="1">Probably secreted via the ESX-5 / type VII secretion system (T7SS).</text>
</comment>
<comment type="similarity">
    <text evidence="2">Belongs to the WXG100 family. CFP-10 subfamily.</text>
</comment>
<protein>
    <recommendedName>
        <fullName evidence="1">ESAT-6-like protein EsxK</fullName>
    </recommendedName>
</protein>